<protein>
    <recommendedName>
        <fullName evidence="1">Small ribosomal subunit protein uS13</fullName>
    </recommendedName>
    <alternativeName>
        <fullName evidence="3">30S ribosomal protein S13</fullName>
    </alternativeName>
</protein>
<keyword id="KW-1185">Reference proteome</keyword>
<keyword id="KW-0687">Ribonucleoprotein</keyword>
<keyword id="KW-0689">Ribosomal protein</keyword>
<keyword id="KW-0694">RNA-binding</keyword>
<keyword id="KW-0699">rRNA-binding</keyword>
<keyword id="KW-0820">tRNA-binding</keyword>
<evidence type="ECO:0000255" key="1">
    <source>
        <dbReference type="HAMAP-Rule" id="MF_01315"/>
    </source>
</evidence>
<evidence type="ECO:0000256" key="2">
    <source>
        <dbReference type="SAM" id="MobiDB-lite"/>
    </source>
</evidence>
<evidence type="ECO:0000305" key="3"/>
<gene>
    <name evidence="1" type="primary">rpsM</name>
    <name evidence="1" type="synonym">rps13</name>
    <name type="ordered locus">PMT_1753</name>
</gene>
<feature type="chain" id="PRO_0000230546" description="Small ribosomal subunit protein uS13">
    <location>
        <begin position="1"/>
        <end position="121"/>
    </location>
</feature>
<feature type="region of interest" description="Disordered" evidence="2">
    <location>
        <begin position="97"/>
        <end position="121"/>
    </location>
</feature>
<feature type="compositionally biased region" description="Basic residues" evidence="2">
    <location>
        <begin position="100"/>
        <end position="121"/>
    </location>
</feature>
<sequence>MARIAGVDIPRDKRVEVALTYIYGIGLTRAKTILTKSDVNPDIRVKDLEDGDVQKLRTALEAFTIEGDLRRQEGMALKRLQDIGCLRGRRHRMSLPVRGQRTRTNARTRRGARKTVAGKKK</sequence>
<proteinExistence type="inferred from homology"/>
<accession>Q7V525</accession>
<comment type="function">
    <text evidence="1">Located at the top of the head of the 30S subunit, it contacts several helices of the 16S rRNA. In the 70S ribosome it contacts the 23S rRNA (bridge B1a) and protein L5 of the 50S subunit (bridge B1b), connecting the 2 subunits; these bridges are implicated in subunit movement. Contacts the tRNAs in the A and P-sites.</text>
</comment>
<comment type="subunit">
    <text evidence="1">Part of the 30S ribosomal subunit. Forms a loose heterodimer with protein S19. Forms two bridges to the 50S subunit in the 70S ribosome.</text>
</comment>
<comment type="similarity">
    <text evidence="1">Belongs to the universal ribosomal protein uS13 family.</text>
</comment>
<organism>
    <name type="scientific">Prochlorococcus marinus (strain MIT 9313)</name>
    <dbReference type="NCBI Taxonomy" id="74547"/>
    <lineage>
        <taxon>Bacteria</taxon>
        <taxon>Bacillati</taxon>
        <taxon>Cyanobacteriota</taxon>
        <taxon>Cyanophyceae</taxon>
        <taxon>Synechococcales</taxon>
        <taxon>Prochlorococcaceae</taxon>
        <taxon>Prochlorococcus</taxon>
    </lineage>
</organism>
<dbReference type="EMBL" id="BX548175">
    <property type="protein sequence ID" value="CAE21928.1"/>
    <property type="molecule type" value="Genomic_DNA"/>
</dbReference>
<dbReference type="RefSeq" id="WP_011131120.1">
    <property type="nucleotide sequence ID" value="NC_005071.1"/>
</dbReference>
<dbReference type="SMR" id="Q7V525"/>
<dbReference type="KEGG" id="pmt:PMT_1753"/>
<dbReference type="eggNOG" id="COG0099">
    <property type="taxonomic scope" value="Bacteria"/>
</dbReference>
<dbReference type="HOGENOM" id="CLU_103849_1_2_3"/>
<dbReference type="OrthoDB" id="9803610at2"/>
<dbReference type="Proteomes" id="UP000001423">
    <property type="component" value="Chromosome"/>
</dbReference>
<dbReference type="GO" id="GO:0005829">
    <property type="term" value="C:cytosol"/>
    <property type="evidence" value="ECO:0007669"/>
    <property type="project" value="TreeGrafter"/>
</dbReference>
<dbReference type="GO" id="GO:0015935">
    <property type="term" value="C:small ribosomal subunit"/>
    <property type="evidence" value="ECO:0007669"/>
    <property type="project" value="TreeGrafter"/>
</dbReference>
<dbReference type="GO" id="GO:0019843">
    <property type="term" value="F:rRNA binding"/>
    <property type="evidence" value="ECO:0007669"/>
    <property type="project" value="UniProtKB-UniRule"/>
</dbReference>
<dbReference type="GO" id="GO:0003735">
    <property type="term" value="F:structural constituent of ribosome"/>
    <property type="evidence" value="ECO:0007669"/>
    <property type="project" value="InterPro"/>
</dbReference>
<dbReference type="GO" id="GO:0000049">
    <property type="term" value="F:tRNA binding"/>
    <property type="evidence" value="ECO:0007669"/>
    <property type="project" value="UniProtKB-UniRule"/>
</dbReference>
<dbReference type="GO" id="GO:0006412">
    <property type="term" value="P:translation"/>
    <property type="evidence" value="ECO:0007669"/>
    <property type="project" value="UniProtKB-UniRule"/>
</dbReference>
<dbReference type="FunFam" id="1.10.8.50:FF:000001">
    <property type="entry name" value="30S ribosomal protein S13"/>
    <property type="match status" value="1"/>
</dbReference>
<dbReference type="Gene3D" id="1.10.8.50">
    <property type="match status" value="1"/>
</dbReference>
<dbReference type="Gene3D" id="4.10.910.10">
    <property type="entry name" value="30s ribosomal protein s13, domain 2"/>
    <property type="match status" value="1"/>
</dbReference>
<dbReference type="HAMAP" id="MF_01315">
    <property type="entry name" value="Ribosomal_uS13"/>
    <property type="match status" value="1"/>
</dbReference>
<dbReference type="InterPro" id="IPR027437">
    <property type="entry name" value="Rbsml_uS13_C"/>
</dbReference>
<dbReference type="InterPro" id="IPR001892">
    <property type="entry name" value="Ribosomal_uS13"/>
</dbReference>
<dbReference type="InterPro" id="IPR010979">
    <property type="entry name" value="Ribosomal_uS13-like_H2TH"/>
</dbReference>
<dbReference type="InterPro" id="IPR019980">
    <property type="entry name" value="Ribosomal_uS13_bac-type"/>
</dbReference>
<dbReference type="InterPro" id="IPR018269">
    <property type="entry name" value="Ribosomal_uS13_CS"/>
</dbReference>
<dbReference type="NCBIfam" id="TIGR03631">
    <property type="entry name" value="uS13_bact"/>
    <property type="match status" value="1"/>
</dbReference>
<dbReference type="PANTHER" id="PTHR10871">
    <property type="entry name" value="30S RIBOSOMAL PROTEIN S13/40S RIBOSOMAL PROTEIN S18"/>
    <property type="match status" value="1"/>
</dbReference>
<dbReference type="PANTHER" id="PTHR10871:SF1">
    <property type="entry name" value="SMALL RIBOSOMAL SUBUNIT PROTEIN US13M"/>
    <property type="match status" value="1"/>
</dbReference>
<dbReference type="Pfam" id="PF00416">
    <property type="entry name" value="Ribosomal_S13"/>
    <property type="match status" value="1"/>
</dbReference>
<dbReference type="PIRSF" id="PIRSF002134">
    <property type="entry name" value="Ribosomal_S13"/>
    <property type="match status" value="1"/>
</dbReference>
<dbReference type="SUPFAM" id="SSF46946">
    <property type="entry name" value="S13-like H2TH domain"/>
    <property type="match status" value="1"/>
</dbReference>
<dbReference type="PROSITE" id="PS00646">
    <property type="entry name" value="RIBOSOMAL_S13_1"/>
    <property type="match status" value="1"/>
</dbReference>
<dbReference type="PROSITE" id="PS50159">
    <property type="entry name" value="RIBOSOMAL_S13_2"/>
    <property type="match status" value="1"/>
</dbReference>
<name>RS13_PROMM</name>
<reference key="1">
    <citation type="journal article" date="2003" name="Nature">
        <title>Genome divergence in two Prochlorococcus ecotypes reflects oceanic niche differentiation.</title>
        <authorList>
            <person name="Rocap G."/>
            <person name="Larimer F.W."/>
            <person name="Lamerdin J.E."/>
            <person name="Malfatti S."/>
            <person name="Chain P."/>
            <person name="Ahlgren N.A."/>
            <person name="Arellano A."/>
            <person name="Coleman M."/>
            <person name="Hauser L."/>
            <person name="Hess W.R."/>
            <person name="Johnson Z.I."/>
            <person name="Land M.L."/>
            <person name="Lindell D."/>
            <person name="Post A.F."/>
            <person name="Regala W."/>
            <person name="Shah M."/>
            <person name="Shaw S.L."/>
            <person name="Steglich C."/>
            <person name="Sullivan M.B."/>
            <person name="Ting C.S."/>
            <person name="Tolonen A."/>
            <person name="Webb E.A."/>
            <person name="Zinser E.R."/>
            <person name="Chisholm S.W."/>
        </authorList>
    </citation>
    <scope>NUCLEOTIDE SEQUENCE [LARGE SCALE GENOMIC DNA]</scope>
    <source>
        <strain>MIT 9313</strain>
    </source>
</reference>